<comment type="function">
    <text evidence="1 4 5">S100A9 is a calcium- and zinc-binding protein which plays a prominent role in the regulation of inflammatory processes and immune response (PubMed:15153104, PubMed:21487906). It can induce neutrophil chemotaxis, adhesion, can increase the bactericidal activity of neutrophils by promoting phagocytosis via activation of SYK, PI3K/AKT, and ERK1/2 and can induce degranulation of neutrophils by a MAPK-dependent mechanism (By similarity). Predominantly found as calprotectin (S100A8/A9) which has a wide plethora of intra- and extracellular functions (By similarity). The intracellular functions include: facilitating leukocyte arachidonic acid trafficking and metabolism, modulation of the tubulin-dependent cytoskeleton during migration of phagocytes and activation of the neutrophilic NADPH-oxidase (By similarity). Also participates in regulatory T-cell differentiation together with CD69. Activates NADPH-oxidase by facilitating the enzyme complex assembly at the cell membrane, transferring arachidonic acid, an essential cofactor, to the enzyme complex and S100A8 contributes to the enzyme assembly by directly binding to NCF2/P67PHOX (By similarity). The extracellular functions involve pro-inflammatory, antimicrobial, oxidant-scavenging and apoptosis-inducing activities (PubMed:21487906). Its pro-inflammatory activity includes recruitment of leukocytes, promotion of cytokine and chemokine production, and regulation of leukocyte adhesion and migration (By similarity). Acts as an alarmin or a danger associated molecular pattern (DAMP) molecule and stimulates innate immune cells via binding to pattern recognition receptors such as Toll-like receptor 4 (TLR4) and receptor for advanced glycation endproducts (AGER) (By similarity). Binding to TLR4 and AGER activates the MAP-kinase and NF-kappa-B signaling pathways resulting in the amplification of the pro-inflammatory cascade (By similarity). Has antimicrobial activity towards bacteria and fungi and exerts its antimicrobial activity probably via chelation of Zn(2+) which is essential for microbial growth (By similarity). Can induce cell death via autophagy and apoptosis and this occurs through the cross-talk of mitochondria and lysosomes via reactive oxygen species (ROS) and the process involves BNIP3 (By similarity). Can regulate neutrophil number and apoptosis by an anti-apoptotic effect; regulates cell survival via ITGAM/ITGB and TLR4 and a signaling mechanism involving MEK-ERK (By similarity). Its role as an oxidant scavenger has a protective role in preventing exaggerated tissue damage by scavenging oxidants (By similarity). The iNOS-S100A8/A9 transnitrosylase complex is proposed to direct selective inflammatory stimulus-dependent S-nitrosylation of multiple targets such as GAPDH, NXA5, EZR, MSN and VIM by recognizing a [IL]-x-C-x-x-[DE] motif (By similarity).</text>
</comment>
<comment type="subunit">
    <text evidence="1 2">Homodimer. Preferentially exists as a heterodimer or heterotetramer with S100A8 known as calprotectin (S100A8/A9) (By similarity). S100A9 interacts with ATP2A2 (By similarity). S100A9 interacts with AGER, and with the heterodimeric complex formed by TLR4 and LY96 in the presence of calcium and/or zinc ions. S100A9 binds quinoline-3-carboxamides in the presence of calcium and/or zinc ions. S100A9 interacts with amyloid-beta protein 40. Calprotectin (S100A8/9) interacts with CEACAM3 and tubulin filaments in a calcium-dependent manner. Heterotetrameric calprotectin (S100A8/A9) interacts with ANXA6 and associates with tubulin filaments in activated monocytes. Calprotectin (S100A8/9) interacts with NCF2/P67PHOX, RAC1, RAC2, CYBA and CYBB. Calprotectin (S100A8/9) interacts with NOS2 to form the iNOS-S100A8/A9 transnitrosylase complex; induced by LDL(ox) (By similarity). Calprotectin (S100A8/9) interacts with CD69 (By similarity).</text>
</comment>
<comment type="subcellular location">
    <subcellularLocation>
        <location evidence="1">Secreted</location>
    </subcellularLocation>
    <subcellularLocation>
        <location evidence="1">Cytoplasm</location>
    </subcellularLocation>
    <subcellularLocation>
        <location evidence="1">Cytoplasm</location>
        <location evidence="1">Cytoskeleton</location>
    </subcellularLocation>
    <subcellularLocation>
        <location evidence="5">Cell membrane</location>
        <topology evidence="5">Peripheral membrane protein</topology>
    </subcellularLocation>
    <text evidence="1">Predominantly localized in the cytoplasm. Upon elevation of the intracellular calcium level, translocated from the cytoplasm to the cytoskeleton and the cell membrane. Upon neutrophil activation or endothelial adhesion of monocytes, is secreted via a microtubule-mediated, alternative pathway.</text>
</comment>
<comment type="tissue specificity">
    <text evidence="4 6">Highly expressed at sites of inflammation.</text>
</comment>
<comment type="PTM">
    <text evidence="1">Phosphorylated. Phosphorylation inhibits activation of tubulin polymerization.</text>
</comment>
<comment type="PTM">
    <text evidence="2">Methylation at His-107 by METTL9 reduces zinc-binding without affecting heterodimerization with S100A8.</text>
</comment>
<comment type="mass spectrometry"/>
<comment type="similarity">
    <text evidence="8">Belongs to the S-100 family.</text>
</comment>
<proteinExistence type="evidence at protein level"/>
<accession>P50116</accession>
<accession>Q761U7</accession>
<gene>
    <name type="primary">S100a9</name>
    <name type="synonym">Mrp14</name>
</gene>
<name>S10A9_RAT</name>
<organism>
    <name type="scientific">Rattus norvegicus</name>
    <name type="common">Rat</name>
    <dbReference type="NCBI Taxonomy" id="10116"/>
    <lineage>
        <taxon>Eukaryota</taxon>
        <taxon>Metazoa</taxon>
        <taxon>Chordata</taxon>
        <taxon>Craniata</taxon>
        <taxon>Vertebrata</taxon>
        <taxon>Euteleostomi</taxon>
        <taxon>Mammalia</taxon>
        <taxon>Eutheria</taxon>
        <taxon>Euarchontoglires</taxon>
        <taxon>Glires</taxon>
        <taxon>Rodentia</taxon>
        <taxon>Myomorpha</taxon>
        <taxon>Muroidea</taxon>
        <taxon>Muridae</taxon>
        <taxon>Murinae</taxon>
        <taxon>Rattus</taxon>
    </lineage>
</organism>
<dbReference type="EMBL" id="L18948">
    <property type="protein sequence ID" value="AAA18214.1"/>
    <property type="molecule type" value="mRNA"/>
</dbReference>
<dbReference type="EMBL" id="AB118215">
    <property type="protein sequence ID" value="BAC82423.1"/>
    <property type="molecule type" value="mRNA"/>
</dbReference>
<dbReference type="PIR" id="JN0686">
    <property type="entry name" value="JN0686"/>
</dbReference>
<dbReference type="RefSeq" id="NP_446039.2">
    <property type="nucleotide sequence ID" value="NM_053587.2"/>
</dbReference>
<dbReference type="SMR" id="P50116"/>
<dbReference type="FunCoup" id="P50116">
    <property type="interactions" value="116"/>
</dbReference>
<dbReference type="IntAct" id="P50116">
    <property type="interactions" value="1"/>
</dbReference>
<dbReference type="STRING" id="10116.ENSRNOP00000015351"/>
<dbReference type="iPTMnet" id="P50116"/>
<dbReference type="PhosphoSitePlus" id="P50116"/>
<dbReference type="PaxDb" id="10116-ENSRNOP00000015351"/>
<dbReference type="GeneID" id="94195"/>
<dbReference type="KEGG" id="rno:94195"/>
<dbReference type="UCSC" id="RGD:620267">
    <property type="organism name" value="rat"/>
</dbReference>
<dbReference type="AGR" id="RGD:620267"/>
<dbReference type="CTD" id="6280"/>
<dbReference type="RGD" id="620267">
    <property type="gene designation" value="S100a9"/>
</dbReference>
<dbReference type="eggNOG" id="ENOG502SA01">
    <property type="taxonomic scope" value="Eukaryota"/>
</dbReference>
<dbReference type="HOGENOM" id="CLU_138624_6_0_1"/>
<dbReference type="InParanoid" id="P50116"/>
<dbReference type="PhylomeDB" id="P50116"/>
<dbReference type="TreeFam" id="TF332727"/>
<dbReference type="Reactome" id="R-RNO-5668599">
    <property type="pathway name" value="RHO GTPases Activate NADPH Oxidases"/>
</dbReference>
<dbReference type="Reactome" id="R-RNO-5686938">
    <property type="pathway name" value="Regulation of TLR by endogenous ligand"/>
</dbReference>
<dbReference type="Reactome" id="R-RNO-6798695">
    <property type="pathway name" value="Neutrophil degranulation"/>
</dbReference>
<dbReference type="Reactome" id="R-RNO-6799990">
    <property type="pathway name" value="Metal sequestration by antimicrobial proteins"/>
</dbReference>
<dbReference type="PRO" id="PR:P50116"/>
<dbReference type="Proteomes" id="UP000002494">
    <property type="component" value="Unplaced"/>
</dbReference>
<dbReference type="GO" id="GO:1990660">
    <property type="term" value="C:calprotectin complex"/>
    <property type="evidence" value="ECO:0000266"/>
    <property type="project" value="RGD"/>
</dbReference>
<dbReference type="GO" id="GO:0001533">
    <property type="term" value="C:cornified envelope"/>
    <property type="evidence" value="ECO:0000266"/>
    <property type="project" value="RGD"/>
</dbReference>
<dbReference type="GO" id="GO:0005737">
    <property type="term" value="C:cytoplasm"/>
    <property type="evidence" value="ECO:0000266"/>
    <property type="project" value="RGD"/>
</dbReference>
<dbReference type="GO" id="GO:0005856">
    <property type="term" value="C:cytoskeleton"/>
    <property type="evidence" value="ECO:0007669"/>
    <property type="project" value="UniProtKB-SubCell"/>
</dbReference>
<dbReference type="GO" id="GO:0005615">
    <property type="term" value="C:extracellular space"/>
    <property type="evidence" value="ECO:0000314"/>
    <property type="project" value="RGD"/>
</dbReference>
<dbReference type="GO" id="GO:1990662">
    <property type="term" value="C:S100A9 complex"/>
    <property type="evidence" value="ECO:0000266"/>
    <property type="project" value="RGD"/>
</dbReference>
<dbReference type="GO" id="GO:0016209">
    <property type="term" value="F:antioxidant activity"/>
    <property type="evidence" value="ECO:0007669"/>
    <property type="project" value="UniProtKB-KW"/>
</dbReference>
<dbReference type="GO" id="GO:0005509">
    <property type="term" value="F:calcium ion binding"/>
    <property type="evidence" value="ECO:0000318"/>
    <property type="project" value="GO_Central"/>
</dbReference>
<dbReference type="GO" id="GO:0048306">
    <property type="term" value="F:calcium-dependent protein binding"/>
    <property type="evidence" value="ECO:0000318"/>
    <property type="project" value="GO_Central"/>
</dbReference>
<dbReference type="GO" id="GO:0030036">
    <property type="term" value="P:actin cytoskeleton organization"/>
    <property type="evidence" value="ECO:0000266"/>
    <property type="project" value="RGD"/>
</dbReference>
<dbReference type="GO" id="GO:0061844">
    <property type="term" value="P:antimicrobial humoral immune response mediated by antimicrobial peptide"/>
    <property type="evidence" value="ECO:0000318"/>
    <property type="project" value="GO_Central"/>
</dbReference>
<dbReference type="GO" id="GO:0006915">
    <property type="term" value="P:apoptotic process"/>
    <property type="evidence" value="ECO:0007669"/>
    <property type="project" value="UniProtKB-KW"/>
</dbReference>
<dbReference type="GO" id="GO:0014002">
    <property type="term" value="P:astrocyte development"/>
    <property type="evidence" value="ECO:0000266"/>
    <property type="project" value="RGD"/>
</dbReference>
<dbReference type="GO" id="GO:0035425">
    <property type="term" value="P:autocrine signaling"/>
    <property type="evidence" value="ECO:0000316"/>
    <property type="project" value="ARUK-UCL"/>
</dbReference>
<dbReference type="GO" id="GO:0006914">
    <property type="term" value="P:autophagy"/>
    <property type="evidence" value="ECO:0000250"/>
    <property type="project" value="UniProtKB"/>
</dbReference>
<dbReference type="GO" id="GO:0002544">
    <property type="term" value="P:chronic inflammatory response"/>
    <property type="evidence" value="ECO:0000270"/>
    <property type="project" value="RGD"/>
</dbReference>
<dbReference type="GO" id="GO:0043542">
    <property type="term" value="P:endothelial cell migration"/>
    <property type="evidence" value="ECO:0000318"/>
    <property type="project" value="GO_Central"/>
</dbReference>
<dbReference type="GO" id="GO:0045087">
    <property type="term" value="P:innate immune response"/>
    <property type="evidence" value="ECO:0007669"/>
    <property type="project" value="UniProtKB-KW"/>
</dbReference>
<dbReference type="GO" id="GO:0030595">
    <property type="term" value="P:leukocyte chemotaxis"/>
    <property type="evidence" value="ECO:0000266"/>
    <property type="project" value="RGD"/>
</dbReference>
<dbReference type="GO" id="GO:0002523">
    <property type="term" value="P:leukocyte migration involved in inflammatory response"/>
    <property type="evidence" value="ECO:0000250"/>
    <property type="project" value="UniProtKB"/>
</dbReference>
<dbReference type="GO" id="GO:0070488">
    <property type="term" value="P:neutrophil aggregation"/>
    <property type="evidence" value="ECO:0000250"/>
    <property type="project" value="UniProtKB"/>
</dbReference>
<dbReference type="GO" id="GO:0030593">
    <property type="term" value="P:neutrophil chemotaxis"/>
    <property type="evidence" value="ECO:0000250"/>
    <property type="project" value="UniProtKB"/>
</dbReference>
<dbReference type="GO" id="GO:0002790">
    <property type="term" value="P:peptide secretion"/>
    <property type="evidence" value="ECO:0000266"/>
    <property type="project" value="RGD"/>
</dbReference>
<dbReference type="GO" id="GO:0030194">
    <property type="term" value="P:positive regulation of blood coagulation"/>
    <property type="evidence" value="ECO:0000266"/>
    <property type="project" value="RGD"/>
</dbReference>
<dbReference type="GO" id="GO:0050729">
    <property type="term" value="P:positive regulation of inflammatory response"/>
    <property type="evidence" value="ECO:0000250"/>
    <property type="project" value="UniProtKB"/>
</dbReference>
<dbReference type="GO" id="GO:2001244">
    <property type="term" value="P:positive regulation of intrinsic apoptotic signaling pathway"/>
    <property type="evidence" value="ECO:0000250"/>
    <property type="project" value="UniProtKB"/>
</dbReference>
<dbReference type="GO" id="GO:0010976">
    <property type="term" value="P:positive regulation of neuron projection development"/>
    <property type="evidence" value="ECO:0000314"/>
    <property type="project" value="ParkinsonsUK-UCL"/>
</dbReference>
<dbReference type="GO" id="GO:0002793">
    <property type="term" value="P:positive regulation of peptide secretion"/>
    <property type="evidence" value="ECO:0000266"/>
    <property type="project" value="RGD"/>
</dbReference>
<dbReference type="GO" id="GO:0045113">
    <property type="term" value="P:regulation of integrin biosynthetic process"/>
    <property type="evidence" value="ECO:0000266"/>
    <property type="project" value="RGD"/>
</dbReference>
<dbReference type="GO" id="GO:0006417">
    <property type="term" value="P:regulation of translation"/>
    <property type="evidence" value="ECO:0000266"/>
    <property type="project" value="RGD"/>
</dbReference>
<dbReference type="GO" id="GO:0045471">
    <property type="term" value="P:response to ethanol"/>
    <property type="evidence" value="ECO:0000270"/>
    <property type="project" value="RGD"/>
</dbReference>
<dbReference type="GO" id="GO:0032496">
    <property type="term" value="P:response to lipopolysaccharide"/>
    <property type="evidence" value="ECO:0000270"/>
    <property type="project" value="RGD"/>
</dbReference>
<dbReference type="GO" id="GO:0010043">
    <property type="term" value="P:response to zinc ion"/>
    <property type="evidence" value="ECO:0000270"/>
    <property type="project" value="RGD"/>
</dbReference>
<dbReference type="CDD" id="cd05030">
    <property type="entry name" value="calgranulins"/>
    <property type="match status" value="1"/>
</dbReference>
<dbReference type="Gene3D" id="1.10.238.10">
    <property type="entry name" value="EF-hand"/>
    <property type="match status" value="1"/>
</dbReference>
<dbReference type="InterPro" id="IPR011992">
    <property type="entry name" value="EF-hand-dom_pair"/>
</dbReference>
<dbReference type="InterPro" id="IPR002048">
    <property type="entry name" value="EF_hand_dom"/>
</dbReference>
<dbReference type="InterPro" id="IPR001751">
    <property type="entry name" value="S100/CaBP7/8-like_CS"/>
</dbReference>
<dbReference type="InterPro" id="IPR013787">
    <property type="entry name" value="S100_Ca-bd_sub"/>
</dbReference>
<dbReference type="PANTHER" id="PTHR11639:SF79">
    <property type="entry name" value="PROTEIN S100-A9"/>
    <property type="match status" value="1"/>
</dbReference>
<dbReference type="PANTHER" id="PTHR11639">
    <property type="entry name" value="S100 CALCIUM-BINDING PROTEIN"/>
    <property type="match status" value="1"/>
</dbReference>
<dbReference type="Pfam" id="PF01023">
    <property type="entry name" value="S_100"/>
    <property type="match status" value="1"/>
</dbReference>
<dbReference type="SMART" id="SM00054">
    <property type="entry name" value="EFh"/>
    <property type="match status" value="1"/>
</dbReference>
<dbReference type="SMART" id="SM01394">
    <property type="entry name" value="S_100"/>
    <property type="match status" value="1"/>
</dbReference>
<dbReference type="SUPFAM" id="SSF47473">
    <property type="entry name" value="EF-hand"/>
    <property type="match status" value="1"/>
</dbReference>
<dbReference type="PROSITE" id="PS50222">
    <property type="entry name" value="EF_HAND_2"/>
    <property type="match status" value="1"/>
</dbReference>
<dbReference type="PROSITE" id="PS00303">
    <property type="entry name" value="S100_CABP"/>
    <property type="match status" value="1"/>
</dbReference>
<reference key="1">
    <citation type="journal article" date="1993" name="Biochem. Biophys. Res. Commun.">
        <title>Expression and cloning of migration inhibitory factor-related protein (MRP)8 and MRP14 in arthritis-susceptible rats.</title>
        <authorList>
            <person name="Imamichi T."/>
            <person name="Uchida I."/>
            <person name="Wahl S.M."/>
            <person name="McCartney-Francis N."/>
        </authorList>
    </citation>
    <scope>NUCLEOTIDE SEQUENCE [MRNA]</scope>
    <scope>TISSUE SPECIFICITY</scope>
    <source>
        <strain>Lewis/N</strain>
        <tissue>Peritoneal cavity</tissue>
    </source>
</reference>
<reference key="2">
    <citation type="journal article" date="1998" name="Anal. Biochem.">
        <title>Identification of posttranslational modifications and cDNA sequencing errors in the rat S100 proteins MRP8 and 14 using electrospray ionization mass spectrometry.</title>
        <authorList>
            <person name="Raftery M.J."/>
            <person name="Geczy C.L."/>
        </authorList>
    </citation>
    <scope>PROTEIN SEQUENCE OF 2-57; 62-65 AND 72-113</scope>
    <scope>MASS SPECTROMETRY</scope>
    <scope>ACETYLATION AT ALA-2</scope>
    <scope>METHYLATION AT HIS-107</scope>
    <source>
        <tissue>Spleen</tissue>
    </source>
</reference>
<reference key="3">
    <citation type="journal article" date="2004" name="Eur. J. Biochem.">
        <title>Fibroblast growth-stimulating activity of S100A9 (MRP-14).</title>
        <authorList>
            <person name="Shibata F."/>
            <person name="Miyama K."/>
            <person name="Shinoda F."/>
            <person name="Mizumoto J."/>
            <person name="Takano K."/>
            <person name="Nakagawa H."/>
        </authorList>
    </citation>
    <scope>NUCLEOTIDE SEQUENCE [MRNA] OF 3-113</scope>
    <scope>PROTEIN SEQUENCE OF 11-25; 38-67; 81-90 AND 94-112</scope>
    <scope>FUNCTION</scope>
    <scope>SUBUNIT</scope>
    <scope>TISSUE SPECIFICITY</scope>
    <source>
        <strain>Wistar</strain>
        <tissue>Macrophage</tissue>
        <tissue>Peritoneal cavity</tissue>
    </source>
</reference>
<reference key="4">
    <citation type="journal article" date="2012" name="Inflammation">
        <title>Dynamic mobility of immunological cells expressing S100A8 and S100A9 in vivo: a variety of functional roles of the two proteins as regulators in acute inflammatory reaction.</title>
        <authorList>
            <person name="Koike A."/>
            <person name="Arai S."/>
            <person name="Yamada S."/>
            <person name="Nagae A."/>
            <person name="Saita N."/>
            <person name="Itoh H."/>
            <person name="Uemoto S."/>
            <person name="Totani M."/>
            <person name="Ikemoto M."/>
        </authorList>
    </citation>
    <scope>FUNCTION</scope>
    <scope>SUBCELLULAR LOCATION</scope>
</reference>
<evidence type="ECO:0000250" key="1">
    <source>
        <dbReference type="UniProtKB" id="P06702"/>
    </source>
</evidence>
<evidence type="ECO:0000250" key="2">
    <source>
        <dbReference type="UniProtKB" id="P31725"/>
    </source>
</evidence>
<evidence type="ECO:0000255" key="3">
    <source>
        <dbReference type="PROSITE-ProRule" id="PRU00448"/>
    </source>
</evidence>
<evidence type="ECO:0000269" key="4">
    <source>
    </source>
</evidence>
<evidence type="ECO:0000269" key="5">
    <source>
    </source>
</evidence>
<evidence type="ECO:0000269" key="6">
    <source>
    </source>
</evidence>
<evidence type="ECO:0000269" key="7">
    <source>
    </source>
</evidence>
<evidence type="ECO:0000305" key="8"/>
<sequence>MAAKTGSQLERSISTIINVFHQYSRKYGHPDTLNKAEFKEMVNKDLPNFLKREKRNENLLRDIMEDLDTNQDNQLSFEECMMLMGKLIFACHEKLHENNPRGHDHSHGKGCGK</sequence>
<feature type="initiator methionine" description="Removed" evidence="7">
    <location>
        <position position="1"/>
    </location>
</feature>
<feature type="chain" id="PRO_0000143999" description="Protein S100-A9">
    <location>
        <begin position="2"/>
        <end position="113"/>
    </location>
</feature>
<feature type="domain" description="EF-hand 1" evidence="8">
    <location>
        <begin position="13"/>
        <end position="48"/>
    </location>
</feature>
<feature type="domain" description="EF-hand 2" evidence="3">
    <location>
        <begin position="55"/>
        <end position="90"/>
    </location>
</feature>
<feature type="binding site" evidence="1">
    <location>
        <position position="21"/>
    </location>
    <ligand>
        <name>Zn(2+)</name>
        <dbReference type="ChEBI" id="CHEBI:29105"/>
    </ligand>
</feature>
<feature type="binding site" evidence="1">
    <location>
        <position position="24"/>
    </location>
    <ligand>
        <name>Ca(2+)</name>
        <dbReference type="ChEBI" id="CHEBI:29108"/>
        <label>1</label>
        <note>low affinity</note>
    </ligand>
</feature>
<feature type="binding site" evidence="1">
    <location>
        <position position="29"/>
    </location>
    <ligand>
        <name>Ca(2+)</name>
        <dbReference type="ChEBI" id="CHEBI:29108"/>
        <label>1</label>
        <note>low affinity</note>
    </ligand>
</feature>
<feature type="binding site" evidence="1">
    <location>
        <position position="31"/>
    </location>
    <ligand>
        <name>Zn(2+)</name>
        <dbReference type="ChEBI" id="CHEBI:29105"/>
    </ligand>
</feature>
<feature type="binding site" evidence="1">
    <location>
        <position position="32"/>
    </location>
    <ligand>
        <name>Ca(2+)</name>
        <dbReference type="ChEBI" id="CHEBI:29108"/>
        <label>1</label>
        <note>low affinity</note>
    </ligand>
</feature>
<feature type="binding site" evidence="1">
    <location>
        <position position="37"/>
    </location>
    <ligand>
        <name>Ca(2+)</name>
        <dbReference type="ChEBI" id="CHEBI:29108"/>
        <label>1</label>
        <note>low affinity</note>
    </ligand>
</feature>
<feature type="binding site" evidence="1">
    <location>
        <position position="68"/>
    </location>
    <ligand>
        <name>Ca(2+)</name>
        <dbReference type="ChEBI" id="CHEBI:29108"/>
        <label>2</label>
        <note>high affinity</note>
    </ligand>
</feature>
<feature type="binding site" evidence="1">
    <location>
        <position position="70"/>
    </location>
    <ligand>
        <name>Ca(2+)</name>
        <dbReference type="ChEBI" id="CHEBI:29108"/>
        <label>2</label>
        <note>high affinity</note>
    </ligand>
</feature>
<feature type="binding site" evidence="1">
    <location>
        <position position="72"/>
    </location>
    <ligand>
        <name>Ca(2+)</name>
        <dbReference type="ChEBI" id="CHEBI:29108"/>
        <label>2</label>
        <note>high affinity</note>
    </ligand>
</feature>
<feature type="binding site" evidence="1">
    <location>
        <position position="74"/>
    </location>
    <ligand>
        <name>Ca(2+)</name>
        <dbReference type="ChEBI" id="CHEBI:29108"/>
        <label>2</label>
        <note>high affinity</note>
    </ligand>
</feature>
<feature type="binding site" evidence="1">
    <location>
        <position position="79"/>
    </location>
    <ligand>
        <name>Ca(2+)</name>
        <dbReference type="ChEBI" id="CHEBI:29108"/>
        <label>2</label>
        <note>high affinity</note>
    </ligand>
</feature>
<feature type="binding site" evidence="1">
    <location>
        <position position="92"/>
    </location>
    <ligand>
        <name>Zn(2+)</name>
        <dbReference type="ChEBI" id="CHEBI:29105"/>
    </ligand>
</feature>
<feature type="binding site" evidence="1">
    <location>
        <position position="96"/>
    </location>
    <ligand>
        <name>Zn(2+)</name>
        <dbReference type="ChEBI" id="CHEBI:29105"/>
    </ligand>
</feature>
<feature type="modified residue" description="N-acetylalanine" evidence="7">
    <location>
        <position position="2"/>
    </location>
</feature>
<feature type="modified residue" description="Pros-methylhistidine" evidence="7">
    <location>
        <position position="107"/>
    </location>
</feature>
<feature type="sequence conflict" description="In Ref. 3; AA sequence." evidence="8" ref="3">
    <original>I</original>
    <variation>Q</variation>
    <location>
        <position position="17"/>
    </location>
</feature>
<feature type="sequence conflict" description="In Ref. 3; AA sequence." evidence="8" ref="3">
    <original>S</original>
    <variation>C</variation>
    <location>
        <position position="24"/>
    </location>
</feature>
<feature type="sequence conflict" description="In Ref. 1; AAA18214." evidence="8" ref="1">
    <original>S</original>
    <variation>R</variation>
    <location>
        <position position="106"/>
    </location>
</feature>
<protein>
    <recommendedName>
        <fullName>Protein S100-A9</fullName>
    </recommendedName>
    <alternativeName>
        <fullName>Calgranulin-B</fullName>
    </alternativeName>
    <alternativeName>
        <fullName>Migration inhibitory factor-related protein 14</fullName>
        <shortName>MRP-14</shortName>
        <shortName>p14</shortName>
    </alternativeName>
    <alternativeName>
        <fullName>Myeloid-related protein 14</fullName>
    </alternativeName>
    <alternativeName>
        <fullName>S100 calcium-binding protein A9</fullName>
    </alternativeName>
</protein>
<keyword id="KW-0007">Acetylation</keyword>
<keyword id="KW-0929">Antimicrobial</keyword>
<keyword id="KW-0049">Antioxidant</keyword>
<keyword id="KW-0053">Apoptosis</keyword>
<keyword id="KW-0072">Autophagy</keyword>
<keyword id="KW-0106">Calcium</keyword>
<keyword id="KW-1003">Cell membrane</keyword>
<keyword id="KW-0145">Chemotaxis</keyword>
<keyword id="KW-0963">Cytoplasm</keyword>
<keyword id="KW-0206">Cytoskeleton</keyword>
<keyword id="KW-0903">Direct protein sequencing</keyword>
<keyword id="KW-0391">Immunity</keyword>
<keyword id="KW-0395">Inflammatory response</keyword>
<keyword id="KW-0399">Innate immunity</keyword>
<keyword id="KW-0472">Membrane</keyword>
<keyword id="KW-0479">Metal-binding</keyword>
<keyword id="KW-0488">Methylation</keyword>
<keyword id="KW-0597">Phosphoprotein</keyword>
<keyword id="KW-1185">Reference proteome</keyword>
<keyword id="KW-0677">Repeat</keyword>
<keyword id="KW-0964">Secreted</keyword>
<keyword id="KW-0862">Zinc</keyword>